<name>RPOL_BPKMV</name>
<organismHost>
    <name type="scientific">Pseudomonas aeruginosa</name>
    <dbReference type="NCBI Taxonomy" id="287"/>
</organismHost>
<sequence length="816" mass="91752">MDLIQQQIAHEEALVGAAQNDARIALEKAIAQGSIDRIPRARIMLMRMLPIVTEAIFAHQEAKAAGPAAKLRHLLRIIDAQDLAVMALRAGLSMLINYPTITATKYYTHMGKMLCREIEVRLAFKVNQPYYDRTLDYLKTSRTRSVRHIQKTMDALLDAVLPEEARIDLPDGDYLRLGKFIGDPLIQCGLFEPNRFTGRGGTSVHLEPSPEAREFLQDPSAAMTWGGPGRSVMLAPPRPWNDWCDGGYYSAKAQKHHVLVRRTKHQTKRARQAQLRHLGQDKMPKVYEAVNVLQSVAYEINRDVYEIIERVFNSGGGVLGIPQRTYPDKPEFPLGDEWAKENASEQELEAFNRWKRSVHRWYTGEREHTAKLREFAALYRVVREHHGKAVYFPMHVDSRGRMYYWGTPNPQGSDIAKACLRFHDKRVLGKRGLYWLKVHVANSLGCDKVYFDDRAAWVDERWDDFQRALAEGPENYPGLFPEAESPLCAIAGLLELRAAYASGNPEGYRSGFIVHMDATCSGLQHYSAILRDEIGGAYVNLLPPGLAKADIYSRVLGLVNESLERDRAPGAEGEARGYALLWDKAGLSRSLTKKPCMTLVYGTTFKGVVDHCLDYLDESGVEIPEGVPSYRLGSYMATLILDAIRETVPSAVFAMEWLQRLAKALPDASKDLHWITPLGMQVFQSYPKTEEVRVRLRAEAVEYVTLYEAKDELDPMRNANGIAPNFVHGLDSSHLGLTALACAAEDIPIQAIHDSMGTYASDVDRMHVHIREQFIAMYSGPCVLVELAKQLGVEATPPRRGSLNLEAVRDSWAFFC</sequence>
<evidence type="ECO:0000250" key="1">
    <source>
        <dbReference type="UniProtKB" id="P00573"/>
    </source>
</evidence>
<evidence type="ECO:0000250" key="2">
    <source>
        <dbReference type="UniProtKB" id="P06221"/>
    </source>
</evidence>
<evidence type="ECO:0000269" key="3">
    <source>
    </source>
</evidence>
<evidence type="ECO:0000303" key="4">
    <source>
    </source>
</evidence>
<evidence type="ECO:0000305" key="5"/>
<evidence type="ECO:0000312" key="6">
    <source>
        <dbReference type="EMBL" id="CAD44217.1"/>
    </source>
</evidence>
<evidence type="ECO:0000312" key="7">
    <source>
        <dbReference type="Proteomes" id="UP000000842"/>
    </source>
</evidence>
<dbReference type="EC" id="2.7.7.6" evidence="2"/>
<dbReference type="EMBL" id="AJ505558">
    <property type="protein sequence ID" value="CAD44217.1"/>
    <property type="molecule type" value="Genomic_DNA"/>
</dbReference>
<dbReference type="RefSeq" id="NP_877465.1">
    <property type="nucleotide sequence ID" value="NC_005045.1"/>
</dbReference>
<dbReference type="SMR" id="Q7Y2D9"/>
<dbReference type="GeneID" id="1482610"/>
<dbReference type="KEGG" id="vg:1482610"/>
<dbReference type="OrthoDB" id="309at10239"/>
<dbReference type="Proteomes" id="UP000000842">
    <property type="component" value="Genome"/>
</dbReference>
<dbReference type="GO" id="GO:0000428">
    <property type="term" value="C:DNA-directed RNA polymerase complex"/>
    <property type="evidence" value="ECO:0007669"/>
    <property type="project" value="UniProtKB-KW"/>
</dbReference>
<dbReference type="GO" id="GO:0003677">
    <property type="term" value="F:DNA binding"/>
    <property type="evidence" value="ECO:0007669"/>
    <property type="project" value="InterPro"/>
</dbReference>
<dbReference type="GO" id="GO:0003899">
    <property type="term" value="F:DNA-directed RNA polymerase activity"/>
    <property type="evidence" value="ECO:0007669"/>
    <property type="project" value="UniProtKB-EC"/>
</dbReference>
<dbReference type="GO" id="GO:0006351">
    <property type="term" value="P:DNA-templated transcription"/>
    <property type="evidence" value="ECO:0007669"/>
    <property type="project" value="InterPro"/>
</dbReference>
<dbReference type="GO" id="GO:0039695">
    <property type="term" value="P:DNA-templated viral transcription"/>
    <property type="evidence" value="ECO:0000250"/>
    <property type="project" value="UniProtKB"/>
</dbReference>
<dbReference type="FunFam" id="1.10.150.20:FF:000138">
    <property type="entry name" value="DNA-dependent RNA polymerase"/>
    <property type="match status" value="1"/>
</dbReference>
<dbReference type="FunFam" id="1.10.287.280:FF:000004">
    <property type="entry name" value="DNA-dependent RNA polymerase"/>
    <property type="match status" value="1"/>
</dbReference>
<dbReference type="Gene3D" id="1.10.287.280">
    <property type="match status" value="1"/>
</dbReference>
<dbReference type="Gene3D" id="1.10.150.20">
    <property type="entry name" value="5' to 3' exonuclease, C-terminal subdomain"/>
    <property type="match status" value="1"/>
</dbReference>
<dbReference type="Gene3D" id="1.10.1320.10">
    <property type="entry name" value="DNA-directed RNA polymerase, N-terminal domain"/>
    <property type="match status" value="1"/>
</dbReference>
<dbReference type="InterPro" id="IPR046950">
    <property type="entry name" value="DNA-dir_Rpol_C_phage-type"/>
</dbReference>
<dbReference type="InterPro" id="IPR002092">
    <property type="entry name" value="DNA-dir_Rpol_phage-type"/>
</dbReference>
<dbReference type="InterPro" id="IPR043502">
    <property type="entry name" value="DNA/RNA_pol_sf"/>
</dbReference>
<dbReference type="InterPro" id="IPR037159">
    <property type="entry name" value="RNA_POL_N_sf"/>
</dbReference>
<dbReference type="InterPro" id="IPR029262">
    <property type="entry name" value="RPOL_N"/>
</dbReference>
<dbReference type="PANTHER" id="PTHR10102">
    <property type="entry name" value="DNA-DIRECTED RNA POLYMERASE, MITOCHONDRIAL"/>
    <property type="match status" value="1"/>
</dbReference>
<dbReference type="PANTHER" id="PTHR10102:SF0">
    <property type="entry name" value="DNA-DIRECTED RNA POLYMERASE, MITOCHONDRIAL"/>
    <property type="match status" value="1"/>
</dbReference>
<dbReference type="Pfam" id="PF00940">
    <property type="entry name" value="RNA_pol"/>
    <property type="match status" value="1"/>
</dbReference>
<dbReference type="Pfam" id="PF14700">
    <property type="entry name" value="RPOL_N"/>
    <property type="match status" value="1"/>
</dbReference>
<dbReference type="SMART" id="SM01311">
    <property type="entry name" value="RPOL_N"/>
    <property type="match status" value="1"/>
</dbReference>
<dbReference type="SUPFAM" id="SSF56672">
    <property type="entry name" value="DNA/RNA polymerases"/>
    <property type="match status" value="1"/>
</dbReference>
<reference key="1">
    <citation type="journal article" date="2003" name="Virology">
        <title>The genome of bacteriophage phiKMV, a T7-like virus infecting Pseudomonas aeruginosa.</title>
        <authorList>
            <person name="Lavigne R."/>
            <person name="Burkal'tseva M.V."/>
            <person name="Robben J."/>
            <person name="Sykilinda N.N."/>
            <person name="Kurochkina L.P."/>
            <person name="Grymonprez B."/>
            <person name="Jonckx B."/>
            <person name="Krylov V.N."/>
            <person name="Mesyanzhinov V.V."/>
            <person name="Volckaert G."/>
        </authorList>
    </citation>
    <scope>NUCLEOTIDE SEQUENCE [GENOMIC DNA]</scope>
    <scope>FUNCTION</scope>
</reference>
<feature type="chain" id="PRO_0000431827" description="DNA-directed RNA polymerase">
    <location>
        <begin position="1"/>
        <end position="816"/>
    </location>
</feature>
<feature type="active site" evidence="1">
    <location>
        <position position="517"/>
    </location>
</feature>
<feature type="active site" evidence="1">
    <location>
        <position position="593"/>
    </location>
</feature>
<feature type="active site" evidence="1">
    <location>
        <position position="754"/>
    </location>
</feature>
<organism evidence="7">
    <name type="scientific">Pseudomonas phage phiKMV</name>
    <dbReference type="NCBI Taxonomy" id="204270"/>
    <lineage>
        <taxon>Viruses</taxon>
        <taxon>Duplodnaviria</taxon>
        <taxon>Heunggongvirae</taxon>
        <taxon>Uroviricota</taxon>
        <taxon>Caudoviricetes</taxon>
        <taxon>Autographiviridae</taxon>
        <taxon>Krylovirinae</taxon>
        <taxon>Phikmvvirus</taxon>
        <taxon>Phikmvvirus phiKMV</taxon>
    </lineage>
</organism>
<gene>
    <name evidence="6" type="primary">gp26</name>
</gene>
<protein>
    <recommendedName>
        <fullName evidence="4">DNA-directed RNA polymerase</fullName>
        <ecNumber evidence="2">2.7.7.6</ecNumber>
    </recommendedName>
</protein>
<proteinExistence type="inferred from homology"/>
<accession>Q7Y2D9</accession>
<comment type="function">
    <text evidence="2 3">DNA-dependent RNA polymerase that catalyzes the transcription of viral genes.</text>
</comment>
<comment type="catalytic activity">
    <reaction evidence="2">
        <text>RNA(n) + a ribonucleoside 5'-triphosphate = RNA(n+1) + diphosphate</text>
        <dbReference type="Rhea" id="RHEA:21248"/>
        <dbReference type="Rhea" id="RHEA-COMP:14527"/>
        <dbReference type="Rhea" id="RHEA-COMP:17342"/>
        <dbReference type="ChEBI" id="CHEBI:33019"/>
        <dbReference type="ChEBI" id="CHEBI:61557"/>
        <dbReference type="ChEBI" id="CHEBI:140395"/>
        <dbReference type="EC" id="2.7.7.6"/>
    </reaction>
</comment>
<comment type="similarity">
    <text evidence="5">Belongs to the phage and mitochondrial RNA polymerase family.</text>
</comment>
<keyword id="KW-0240">DNA-directed RNA polymerase</keyword>
<keyword id="KW-0548">Nucleotidyltransferase</keyword>
<keyword id="KW-1185">Reference proteome</keyword>
<keyword id="KW-0804">Transcription</keyword>
<keyword id="KW-0808">Transferase</keyword>
<keyword id="KW-1195">Viral transcription</keyword>